<name>PUR7_EXISA</name>
<keyword id="KW-0067">ATP-binding</keyword>
<keyword id="KW-0436">Ligase</keyword>
<keyword id="KW-0547">Nucleotide-binding</keyword>
<keyword id="KW-0658">Purine biosynthesis</keyword>
<organism>
    <name type="scientific">Exiguobacterium sp. (strain ATCC BAA-1283 / AT1b)</name>
    <dbReference type="NCBI Taxonomy" id="360911"/>
    <lineage>
        <taxon>Bacteria</taxon>
        <taxon>Bacillati</taxon>
        <taxon>Bacillota</taxon>
        <taxon>Bacilli</taxon>
        <taxon>Bacillales</taxon>
        <taxon>Bacillales Family XII. Incertae Sedis</taxon>
        <taxon>Exiguobacterium</taxon>
    </lineage>
</organism>
<protein>
    <recommendedName>
        <fullName evidence="1">Phosphoribosylaminoimidazole-succinocarboxamide synthase</fullName>
        <ecNumber evidence="1">6.3.2.6</ecNumber>
    </recommendedName>
    <alternativeName>
        <fullName evidence="1">SAICAR synthetase</fullName>
    </alternativeName>
</protein>
<reference key="1">
    <citation type="journal article" date="2011" name="J. Bacteriol.">
        <title>Complete genome sequence of the Thermophilic Bacterium Exiguobacterium sp. AT1b.</title>
        <authorList>
            <person name="Vishnivetskaya T.A."/>
            <person name="Lucas S."/>
            <person name="Copeland A."/>
            <person name="Lapidus A."/>
            <person name="Glavina del Rio T."/>
            <person name="Dalin E."/>
            <person name="Tice H."/>
            <person name="Bruce D.C."/>
            <person name="Goodwin L.A."/>
            <person name="Pitluck S."/>
            <person name="Saunders E."/>
            <person name="Brettin T."/>
            <person name="Detter C."/>
            <person name="Han C."/>
            <person name="Larimer F."/>
            <person name="Land M.L."/>
            <person name="Hauser L.J."/>
            <person name="Kyrpides N.C."/>
            <person name="Ovchinnikova G."/>
            <person name="Kathariou S."/>
            <person name="Ramaley R.F."/>
            <person name="Rodrigues D.F."/>
            <person name="Hendrix C."/>
            <person name="Richardson P."/>
            <person name="Tiedje J.M."/>
        </authorList>
    </citation>
    <scope>NUCLEOTIDE SEQUENCE [LARGE SCALE GENOMIC DNA]</scope>
    <source>
        <strain>ATCC BAA-1283 / AT1b</strain>
    </source>
</reference>
<evidence type="ECO:0000255" key="1">
    <source>
        <dbReference type="HAMAP-Rule" id="MF_00137"/>
    </source>
</evidence>
<proteinExistence type="inferred from homology"/>
<feature type="chain" id="PRO_1000203229" description="Phosphoribosylaminoimidazole-succinocarboxamide synthase">
    <location>
        <begin position="1"/>
        <end position="234"/>
    </location>
</feature>
<sequence>MKAIYEGKAKALFETEEAGVLRVYYKDDATAFNGEKKESIDGKGILNNAITTQLFELMHDNKIPTHFIKQISDREQLVRRVDIIPLEVVVRNVAAGSLAKRLGWEEGTPLLAPIVEFYYKDDALGDPLLTEDHIRLLQVATHKEVETLRQLGLWVNDVLLDFFGQHGIDVIDFKLEFGKVDGTIILADEISPDTCRLWDKETKQKLDKDVFRRDLGSLTETYGQLLTRIGGNGQ</sequence>
<comment type="catalytic activity">
    <reaction evidence="1">
        <text>5-amino-1-(5-phospho-D-ribosyl)imidazole-4-carboxylate + L-aspartate + ATP = (2S)-2-[5-amino-1-(5-phospho-beta-D-ribosyl)imidazole-4-carboxamido]succinate + ADP + phosphate + 2 H(+)</text>
        <dbReference type="Rhea" id="RHEA:22628"/>
        <dbReference type="ChEBI" id="CHEBI:15378"/>
        <dbReference type="ChEBI" id="CHEBI:29991"/>
        <dbReference type="ChEBI" id="CHEBI:30616"/>
        <dbReference type="ChEBI" id="CHEBI:43474"/>
        <dbReference type="ChEBI" id="CHEBI:58443"/>
        <dbReference type="ChEBI" id="CHEBI:77657"/>
        <dbReference type="ChEBI" id="CHEBI:456216"/>
        <dbReference type="EC" id="6.3.2.6"/>
    </reaction>
</comment>
<comment type="pathway">
    <text evidence="1">Purine metabolism; IMP biosynthesis via de novo pathway; 5-amino-1-(5-phospho-D-ribosyl)imidazole-4-carboxamide from 5-amino-1-(5-phospho-D-ribosyl)imidazole-4-carboxylate: step 1/2.</text>
</comment>
<comment type="similarity">
    <text evidence="1">Belongs to the SAICAR synthetase family.</text>
</comment>
<dbReference type="EC" id="6.3.2.6" evidence="1"/>
<dbReference type="EMBL" id="CP001615">
    <property type="protein sequence ID" value="ACQ71148.1"/>
    <property type="molecule type" value="Genomic_DNA"/>
</dbReference>
<dbReference type="RefSeq" id="WP_015880707.1">
    <property type="nucleotide sequence ID" value="NC_012673.1"/>
</dbReference>
<dbReference type="SMR" id="C4L296"/>
<dbReference type="STRING" id="360911.EAT1b_2226"/>
<dbReference type="KEGG" id="eat:EAT1b_2226"/>
<dbReference type="eggNOG" id="COG0152">
    <property type="taxonomic scope" value="Bacteria"/>
</dbReference>
<dbReference type="HOGENOM" id="CLU_061495_2_0_9"/>
<dbReference type="OrthoDB" id="9801549at2"/>
<dbReference type="UniPathway" id="UPA00074">
    <property type="reaction ID" value="UER00131"/>
</dbReference>
<dbReference type="Proteomes" id="UP000000716">
    <property type="component" value="Chromosome"/>
</dbReference>
<dbReference type="GO" id="GO:0005524">
    <property type="term" value="F:ATP binding"/>
    <property type="evidence" value="ECO:0007669"/>
    <property type="project" value="UniProtKB-KW"/>
</dbReference>
<dbReference type="GO" id="GO:0004639">
    <property type="term" value="F:phosphoribosylaminoimidazolesuccinocarboxamide synthase activity"/>
    <property type="evidence" value="ECO:0007669"/>
    <property type="project" value="UniProtKB-UniRule"/>
</dbReference>
<dbReference type="GO" id="GO:0006189">
    <property type="term" value="P:'de novo' IMP biosynthetic process"/>
    <property type="evidence" value="ECO:0007669"/>
    <property type="project" value="UniProtKB-UniRule"/>
</dbReference>
<dbReference type="GO" id="GO:0009236">
    <property type="term" value="P:cobalamin biosynthetic process"/>
    <property type="evidence" value="ECO:0007669"/>
    <property type="project" value="InterPro"/>
</dbReference>
<dbReference type="CDD" id="cd01415">
    <property type="entry name" value="SAICAR_synt_PurC"/>
    <property type="match status" value="1"/>
</dbReference>
<dbReference type="FunFam" id="3.30.470.20:FF:000006">
    <property type="entry name" value="Phosphoribosylaminoimidazole-succinocarboxamide synthase"/>
    <property type="match status" value="1"/>
</dbReference>
<dbReference type="Gene3D" id="3.30.470.20">
    <property type="entry name" value="ATP-grasp fold, B domain"/>
    <property type="match status" value="1"/>
</dbReference>
<dbReference type="Gene3D" id="3.30.200.20">
    <property type="entry name" value="Phosphorylase Kinase, domain 1"/>
    <property type="match status" value="1"/>
</dbReference>
<dbReference type="HAMAP" id="MF_00137">
    <property type="entry name" value="SAICAR_synth"/>
    <property type="match status" value="1"/>
</dbReference>
<dbReference type="InterPro" id="IPR028923">
    <property type="entry name" value="SAICAR_synt/ADE2_N"/>
</dbReference>
<dbReference type="InterPro" id="IPR033934">
    <property type="entry name" value="SAICAR_synt_PurC"/>
</dbReference>
<dbReference type="InterPro" id="IPR001636">
    <property type="entry name" value="SAICAR_synth"/>
</dbReference>
<dbReference type="InterPro" id="IPR050089">
    <property type="entry name" value="SAICAR_synthetase"/>
</dbReference>
<dbReference type="InterPro" id="IPR018236">
    <property type="entry name" value="SAICAR_synthetase_CS"/>
</dbReference>
<dbReference type="NCBIfam" id="TIGR00081">
    <property type="entry name" value="purC"/>
    <property type="match status" value="1"/>
</dbReference>
<dbReference type="PANTHER" id="PTHR43599">
    <property type="entry name" value="MULTIFUNCTIONAL PROTEIN ADE2"/>
    <property type="match status" value="1"/>
</dbReference>
<dbReference type="PANTHER" id="PTHR43599:SF3">
    <property type="entry name" value="SI:DKEY-6E2.2"/>
    <property type="match status" value="1"/>
</dbReference>
<dbReference type="Pfam" id="PF01259">
    <property type="entry name" value="SAICAR_synt"/>
    <property type="match status" value="1"/>
</dbReference>
<dbReference type="SUPFAM" id="SSF56104">
    <property type="entry name" value="SAICAR synthase-like"/>
    <property type="match status" value="1"/>
</dbReference>
<dbReference type="PROSITE" id="PS01057">
    <property type="entry name" value="SAICAR_SYNTHETASE_1"/>
    <property type="match status" value="1"/>
</dbReference>
<gene>
    <name evidence="1" type="primary">purC</name>
    <name type="ordered locus">EAT1b_2226</name>
</gene>
<accession>C4L296</accession>